<dbReference type="EMBL" id="CP000114">
    <property type="protein sequence ID" value="ABA46295.1"/>
    <property type="molecule type" value="Genomic_DNA"/>
</dbReference>
<dbReference type="RefSeq" id="WP_000532903.1">
    <property type="nucleotide sequence ID" value="NC_007432.1"/>
</dbReference>
<dbReference type="SMR" id="Q3JZP3"/>
<dbReference type="KEGG" id="sak:SAK_1658"/>
<dbReference type="HOGENOM" id="CLU_062974_2_0_9"/>
<dbReference type="GO" id="GO:0005829">
    <property type="term" value="C:cytosol"/>
    <property type="evidence" value="ECO:0007669"/>
    <property type="project" value="TreeGrafter"/>
</dbReference>
<dbReference type="GO" id="GO:0003677">
    <property type="term" value="F:DNA binding"/>
    <property type="evidence" value="ECO:0007669"/>
    <property type="project" value="UniProtKB-UniRule"/>
</dbReference>
<dbReference type="GO" id="GO:0006355">
    <property type="term" value="P:regulation of DNA-templated transcription"/>
    <property type="evidence" value="ECO:0007669"/>
    <property type="project" value="UniProtKB-UniRule"/>
</dbReference>
<dbReference type="FunFam" id="1.10.10.200:FF:000003">
    <property type="entry name" value="Probable transcriptional regulatory protein YeeN"/>
    <property type="match status" value="1"/>
</dbReference>
<dbReference type="FunFam" id="3.30.70.980:FF:000004">
    <property type="entry name" value="Probable transcriptional regulatory protein YeeN"/>
    <property type="match status" value="1"/>
</dbReference>
<dbReference type="Gene3D" id="1.10.10.200">
    <property type="match status" value="1"/>
</dbReference>
<dbReference type="Gene3D" id="3.30.70.980">
    <property type="match status" value="2"/>
</dbReference>
<dbReference type="HAMAP" id="MF_00693">
    <property type="entry name" value="Transcrip_reg_TACO1"/>
    <property type="match status" value="1"/>
</dbReference>
<dbReference type="HAMAP" id="MF_00918">
    <property type="entry name" value="Transcrip_reg_TACO1_YeeN"/>
    <property type="match status" value="1"/>
</dbReference>
<dbReference type="InterPro" id="IPR017856">
    <property type="entry name" value="Integrase-like_N"/>
</dbReference>
<dbReference type="InterPro" id="IPR048300">
    <property type="entry name" value="TACO1_YebC-like_2nd/3rd_dom"/>
</dbReference>
<dbReference type="InterPro" id="IPR049083">
    <property type="entry name" value="TACO1_YebC_N"/>
</dbReference>
<dbReference type="InterPro" id="IPR002876">
    <property type="entry name" value="Transcrip_reg_TACO1-like"/>
</dbReference>
<dbReference type="InterPro" id="IPR026564">
    <property type="entry name" value="Transcrip_reg_TACO1-like_dom3"/>
</dbReference>
<dbReference type="InterPro" id="IPR026562">
    <property type="entry name" value="Transcrip_reg_TACO1_YeeN"/>
</dbReference>
<dbReference type="InterPro" id="IPR029072">
    <property type="entry name" value="YebC-like"/>
</dbReference>
<dbReference type="NCBIfam" id="NF001030">
    <property type="entry name" value="PRK00110.1"/>
    <property type="match status" value="1"/>
</dbReference>
<dbReference type="NCBIfam" id="NF009044">
    <property type="entry name" value="PRK12378.1"/>
    <property type="match status" value="1"/>
</dbReference>
<dbReference type="NCBIfam" id="TIGR01033">
    <property type="entry name" value="YebC/PmpR family DNA-binding transcriptional regulator"/>
    <property type="match status" value="1"/>
</dbReference>
<dbReference type="PANTHER" id="PTHR12532">
    <property type="entry name" value="TRANSLATIONAL ACTIVATOR OF CYTOCHROME C OXIDASE 1"/>
    <property type="match status" value="1"/>
</dbReference>
<dbReference type="PANTHER" id="PTHR12532:SF0">
    <property type="entry name" value="TRANSLATIONAL ACTIVATOR OF CYTOCHROME C OXIDASE 1"/>
    <property type="match status" value="1"/>
</dbReference>
<dbReference type="Pfam" id="PF20772">
    <property type="entry name" value="TACO1_YebC_N"/>
    <property type="match status" value="1"/>
</dbReference>
<dbReference type="Pfam" id="PF01709">
    <property type="entry name" value="Transcrip_reg"/>
    <property type="match status" value="1"/>
</dbReference>
<dbReference type="SUPFAM" id="SSF75625">
    <property type="entry name" value="YebC-like"/>
    <property type="match status" value="1"/>
</dbReference>
<keyword id="KW-0963">Cytoplasm</keyword>
<keyword id="KW-0238">DNA-binding</keyword>
<keyword id="KW-0804">Transcription</keyword>
<keyword id="KW-0805">Transcription regulation</keyword>
<organism>
    <name type="scientific">Streptococcus agalactiae serotype Ia (strain ATCC 27591 / A909 / CDC SS700)</name>
    <dbReference type="NCBI Taxonomy" id="205921"/>
    <lineage>
        <taxon>Bacteria</taxon>
        <taxon>Bacillati</taxon>
        <taxon>Bacillota</taxon>
        <taxon>Bacilli</taxon>
        <taxon>Lactobacillales</taxon>
        <taxon>Streptococcaceae</taxon>
        <taxon>Streptococcus</taxon>
    </lineage>
</organism>
<feature type="chain" id="PRO_0000257141" description="Probable transcriptional regulatory protein SAK_1658">
    <location>
        <begin position="1"/>
        <end position="238"/>
    </location>
</feature>
<reference key="1">
    <citation type="journal article" date="2005" name="Proc. Natl. Acad. Sci. U.S.A.">
        <title>Genome analysis of multiple pathogenic isolates of Streptococcus agalactiae: implications for the microbial 'pan-genome'.</title>
        <authorList>
            <person name="Tettelin H."/>
            <person name="Masignani V."/>
            <person name="Cieslewicz M.J."/>
            <person name="Donati C."/>
            <person name="Medini D."/>
            <person name="Ward N.L."/>
            <person name="Angiuoli S.V."/>
            <person name="Crabtree J."/>
            <person name="Jones A.L."/>
            <person name="Durkin A.S."/>
            <person name="DeBoy R.T."/>
            <person name="Davidsen T.M."/>
            <person name="Mora M."/>
            <person name="Scarselli M."/>
            <person name="Margarit y Ros I."/>
            <person name="Peterson J.D."/>
            <person name="Hauser C.R."/>
            <person name="Sundaram J.P."/>
            <person name="Nelson W.C."/>
            <person name="Madupu R."/>
            <person name="Brinkac L.M."/>
            <person name="Dodson R.J."/>
            <person name="Rosovitz M.J."/>
            <person name="Sullivan S.A."/>
            <person name="Daugherty S.C."/>
            <person name="Haft D.H."/>
            <person name="Selengut J."/>
            <person name="Gwinn M.L."/>
            <person name="Zhou L."/>
            <person name="Zafar N."/>
            <person name="Khouri H."/>
            <person name="Radune D."/>
            <person name="Dimitrov G."/>
            <person name="Watkins K."/>
            <person name="O'Connor K.J."/>
            <person name="Smith S."/>
            <person name="Utterback T.R."/>
            <person name="White O."/>
            <person name="Rubens C.E."/>
            <person name="Grandi G."/>
            <person name="Madoff L.C."/>
            <person name="Kasper D.L."/>
            <person name="Telford J.L."/>
            <person name="Wessels M.R."/>
            <person name="Rappuoli R."/>
            <person name="Fraser C.M."/>
        </authorList>
    </citation>
    <scope>NUCLEOTIDE SEQUENCE [LARGE SCALE GENOMIC DNA]</scope>
    <source>
        <strain>ATCC 27591 / A909 / CDC SS700</strain>
    </source>
</reference>
<name>Y1658_STRA1</name>
<comment type="subcellular location">
    <subcellularLocation>
        <location evidence="1">Cytoplasm</location>
    </subcellularLocation>
</comment>
<comment type="similarity">
    <text evidence="1">Belongs to the TACO1 family. YeeN subfamily.</text>
</comment>
<gene>
    <name type="ordered locus">SAK_1658</name>
</gene>
<sequence>MGRKWANIVAKKTAKDGANSKVYAKFGVEIYVAAKQGEPDPESNSALKFVLDRAKQAQVPKHVIDKAIDKAKGNTDETFVEGRYEGFGPNGSMIIVDTLTSNVNRTAANVRTAYGKNGGNMGASGSVSYLFDKKGVIVFAGDDADTVFEQLLEADVDVDDVEAEEGTITVYTAPTDLHKGIQALRDNGVEEFQVTELEMIPQSEVVLEGDDLETFEKLIDALESDDDVQKVYHNVADF</sequence>
<accession>Q3JZP3</accession>
<protein>
    <recommendedName>
        <fullName evidence="1">Probable transcriptional regulatory protein SAK_1658</fullName>
    </recommendedName>
</protein>
<evidence type="ECO:0000255" key="1">
    <source>
        <dbReference type="HAMAP-Rule" id="MF_00918"/>
    </source>
</evidence>
<proteinExistence type="inferred from homology"/>